<dbReference type="EMBL" id="AL035521">
    <property type="protein sequence ID" value="CAB36710.1"/>
    <property type="molecule type" value="Genomic_DNA"/>
</dbReference>
<dbReference type="EMBL" id="AL161585">
    <property type="protein sequence ID" value="CAB80150.1"/>
    <property type="molecule type" value="Genomic_DNA"/>
</dbReference>
<dbReference type="EMBL" id="CP002687">
    <property type="protein sequence ID" value="AEE86360.1"/>
    <property type="molecule type" value="Genomic_DNA"/>
</dbReference>
<dbReference type="PIR" id="T04779">
    <property type="entry name" value="T04779"/>
</dbReference>
<dbReference type="RefSeq" id="NP_195159.1">
    <property type="nucleotide sequence ID" value="NM_119598.2"/>
</dbReference>
<dbReference type="SMR" id="Q9SYZ8"/>
<dbReference type="STRING" id="3702.Q9SYZ8"/>
<dbReference type="PaxDb" id="3702-AT4G34330.1"/>
<dbReference type="DNASU" id="829583"/>
<dbReference type="EnsemblPlants" id="AT4G34330.1">
    <property type="protein sequence ID" value="AT4G34330.1"/>
    <property type="gene ID" value="AT4G34330"/>
</dbReference>
<dbReference type="GeneID" id="829583"/>
<dbReference type="Gramene" id="AT4G34330.1">
    <property type="protein sequence ID" value="AT4G34330.1"/>
    <property type="gene ID" value="AT4G34330"/>
</dbReference>
<dbReference type="KEGG" id="ath:AT4G34330"/>
<dbReference type="Araport" id="AT4G34330"/>
<dbReference type="TAIR" id="AT4G34330"/>
<dbReference type="eggNOG" id="ENOG502QQBT">
    <property type="taxonomic scope" value="Eukaryota"/>
</dbReference>
<dbReference type="HOGENOM" id="CLU_044778_0_0_1"/>
<dbReference type="InParanoid" id="Q9SYZ8"/>
<dbReference type="OMA" id="MCHSGGI"/>
<dbReference type="PhylomeDB" id="Q9SYZ8"/>
<dbReference type="PRO" id="PR:Q9SYZ8"/>
<dbReference type="Proteomes" id="UP000006548">
    <property type="component" value="Chromosome 4"/>
</dbReference>
<dbReference type="ExpressionAtlas" id="Q9SYZ8">
    <property type="expression patterns" value="baseline and differential"/>
</dbReference>
<dbReference type="GO" id="GO:0016020">
    <property type="term" value="C:membrane"/>
    <property type="evidence" value="ECO:0007669"/>
    <property type="project" value="UniProtKB-SubCell"/>
</dbReference>
<dbReference type="InterPro" id="IPR007749">
    <property type="entry name" value="DUF677"/>
</dbReference>
<dbReference type="PANTHER" id="PTHR31113:SF3">
    <property type="entry name" value="UPF0496 PROTEIN 1"/>
    <property type="match status" value="1"/>
</dbReference>
<dbReference type="PANTHER" id="PTHR31113">
    <property type="entry name" value="UPF0496 PROTEIN 3-RELATED"/>
    <property type="match status" value="1"/>
</dbReference>
<dbReference type="Pfam" id="PF05055">
    <property type="entry name" value="DUF677"/>
    <property type="match status" value="1"/>
</dbReference>
<reference key="1">
    <citation type="journal article" date="1999" name="Nature">
        <title>Sequence and analysis of chromosome 4 of the plant Arabidopsis thaliana.</title>
        <authorList>
            <person name="Mayer K.F.X."/>
            <person name="Schueller C."/>
            <person name="Wambutt R."/>
            <person name="Murphy G."/>
            <person name="Volckaert G."/>
            <person name="Pohl T."/>
            <person name="Duesterhoeft A."/>
            <person name="Stiekema W."/>
            <person name="Entian K.-D."/>
            <person name="Terryn N."/>
            <person name="Harris B."/>
            <person name="Ansorge W."/>
            <person name="Brandt P."/>
            <person name="Grivell L.A."/>
            <person name="Rieger M."/>
            <person name="Weichselgartner M."/>
            <person name="de Simone V."/>
            <person name="Obermaier B."/>
            <person name="Mache R."/>
            <person name="Mueller M."/>
            <person name="Kreis M."/>
            <person name="Delseny M."/>
            <person name="Puigdomenech P."/>
            <person name="Watson M."/>
            <person name="Schmidtheini T."/>
            <person name="Reichert B."/>
            <person name="Portetelle D."/>
            <person name="Perez-Alonso M."/>
            <person name="Boutry M."/>
            <person name="Bancroft I."/>
            <person name="Vos P."/>
            <person name="Hoheisel J."/>
            <person name="Zimmermann W."/>
            <person name="Wedler H."/>
            <person name="Ridley P."/>
            <person name="Langham S.-A."/>
            <person name="McCullagh B."/>
            <person name="Bilham L."/>
            <person name="Robben J."/>
            <person name="van der Schueren J."/>
            <person name="Grymonprez B."/>
            <person name="Chuang Y.-J."/>
            <person name="Vandenbussche F."/>
            <person name="Braeken M."/>
            <person name="Weltjens I."/>
            <person name="Voet M."/>
            <person name="Bastiaens I."/>
            <person name="Aert R."/>
            <person name="Defoor E."/>
            <person name="Weitzenegger T."/>
            <person name="Bothe G."/>
            <person name="Ramsperger U."/>
            <person name="Hilbert H."/>
            <person name="Braun M."/>
            <person name="Holzer E."/>
            <person name="Brandt A."/>
            <person name="Peters S."/>
            <person name="van Staveren M."/>
            <person name="Dirkse W."/>
            <person name="Mooijman P."/>
            <person name="Klein Lankhorst R."/>
            <person name="Rose M."/>
            <person name="Hauf J."/>
            <person name="Koetter P."/>
            <person name="Berneiser S."/>
            <person name="Hempel S."/>
            <person name="Feldpausch M."/>
            <person name="Lamberth S."/>
            <person name="Van den Daele H."/>
            <person name="De Keyser A."/>
            <person name="Buysshaert C."/>
            <person name="Gielen J."/>
            <person name="Villarroel R."/>
            <person name="De Clercq R."/>
            <person name="van Montagu M."/>
            <person name="Rogers J."/>
            <person name="Cronin A."/>
            <person name="Quail M.A."/>
            <person name="Bray-Allen S."/>
            <person name="Clark L."/>
            <person name="Doggett J."/>
            <person name="Hall S."/>
            <person name="Kay M."/>
            <person name="Lennard N."/>
            <person name="McLay K."/>
            <person name="Mayes R."/>
            <person name="Pettett A."/>
            <person name="Rajandream M.A."/>
            <person name="Lyne M."/>
            <person name="Benes V."/>
            <person name="Rechmann S."/>
            <person name="Borkova D."/>
            <person name="Bloecker H."/>
            <person name="Scharfe M."/>
            <person name="Grimm M."/>
            <person name="Loehnert T.-H."/>
            <person name="Dose S."/>
            <person name="de Haan M."/>
            <person name="Maarse A.C."/>
            <person name="Schaefer M."/>
            <person name="Mueller-Auer S."/>
            <person name="Gabel C."/>
            <person name="Fuchs M."/>
            <person name="Fartmann B."/>
            <person name="Granderath K."/>
            <person name="Dauner D."/>
            <person name="Herzl A."/>
            <person name="Neumann S."/>
            <person name="Argiriou A."/>
            <person name="Vitale D."/>
            <person name="Liguori R."/>
            <person name="Piravandi E."/>
            <person name="Massenet O."/>
            <person name="Quigley F."/>
            <person name="Clabauld G."/>
            <person name="Muendlein A."/>
            <person name="Felber R."/>
            <person name="Schnabl S."/>
            <person name="Hiller R."/>
            <person name="Schmidt W."/>
            <person name="Lecharny A."/>
            <person name="Aubourg S."/>
            <person name="Chefdor F."/>
            <person name="Cooke R."/>
            <person name="Berger C."/>
            <person name="Monfort A."/>
            <person name="Casacuberta E."/>
            <person name="Gibbons T."/>
            <person name="Weber N."/>
            <person name="Vandenbol M."/>
            <person name="Bargues M."/>
            <person name="Terol J."/>
            <person name="Torres A."/>
            <person name="Perez-Perez A."/>
            <person name="Purnelle B."/>
            <person name="Bent E."/>
            <person name="Johnson S."/>
            <person name="Tacon D."/>
            <person name="Jesse T."/>
            <person name="Heijnen L."/>
            <person name="Schwarz S."/>
            <person name="Scholler P."/>
            <person name="Heber S."/>
            <person name="Francs P."/>
            <person name="Bielke C."/>
            <person name="Frishman D."/>
            <person name="Haase D."/>
            <person name="Lemcke K."/>
            <person name="Mewes H.-W."/>
            <person name="Stocker S."/>
            <person name="Zaccaria P."/>
            <person name="Bevan M."/>
            <person name="Wilson R.K."/>
            <person name="de la Bastide M."/>
            <person name="Habermann K."/>
            <person name="Parnell L."/>
            <person name="Dedhia N."/>
            <person name="Gnoj L."/>
            <person name="Schutz K."/>
            <person name="Huang E."/>
            <person name="Spiegel L."/>
            <person name="Sekhon M."/>
            <person name="Murray J."/>
            <person name="Sheet P."/>
            <person name="Cordes M."/>
            <person name="Abu-Threideh J."/>
            <person name="Stoneking T."/>
            <person name="Kalicki J."/>
            <person name="Graves T."/>
            <person name="Harmon G."/>
            <person name="Edwards J."/>
            <person name="Latreille P."/>
            <person name="Courtney L."/>
            <person name="Cloud J."/>
            <person name="Abbott A."/>
            <person name="Scott K."/>
            <person name="Johnson D."/>
            <person name="Minx P."/>
            <person name="Bentley D."/>
            <person name="Fulton B."/>
            <person name="Miller N."/>
            <person name="Greco T."/>
            <person name="Kemp K."/>
            <person name="Kramer J."/>
            <person name="Fulton L."/>
            <person name="Mardis E."/>
            <person name="Dante M."/>
            <person name="Pepin K."/>
            <person name="Hillier L.W."/>
            <person name="Nelson J."/>
            <person name="Spieth J."/>
            <person name="Ryan E."/>
            <person name="Andrews S."/>
            <person name="Geisel C."/>
            <person name="Layman D."/>
            <person name="Du H."/>
            <person name="Ali J."/>
            <person name="Berghoff A."/>
            <person name="Jones K."/>
            <person name="Drone K."/>
            <person name="Cotton M."/>
            <person name="Joshu C."/>
            <person name="Antonoiu B."/>
            <person name="Zidanic M."/>
            <person name="Strong C."/>
            <person name="Sun H."/>
            <person name="Lamar B."/>
            <person name="Yordan C."/>
            <person name="Ma P."/>
            <person name="Zhong J."/>
            <person name="Preston R."/>
            <person name="Vil D."/>
            <person name="Shekher M."/>
            <person name="Matero A."/>
            <person name="Shah R."/>
            <person name="Swaby I.K."/>
            <person name="O'Shaughnessy A."/>
            <person name="Rodriguez M."/>
            <person name="Hoffman J."/>
            <person name="Till S."/>
            <person name="Granat S."/>
            <person name="Shohdy N."/>
            <person name="Hasegawa A."/>
            <person name="Hameed A."/>
            <person name="Lodhi M."/>
            <person name="Johnson A."/>
            <person name="Chen E."/>
            <person name="Marra M.A."/>
            <person name="Martienssen R."/>
            <person name="McCombie W.R."/>
        </authorList>
    </citation>
    <scope>NUCLEOTIDE SEQUENCE [LARGE SCALE GENOMIC DNA]</scope>
    <source>
        <strain>cv. Columbia</strain>
    </source>
</reference>
<reference key="2">
    <citation type="journal article" date="2017" name="Plant J.">
        <title>Araport11: a complete reannotation of the Arabidopsis thaliana reference genome.</title>
        <authorList>
            <person name="Cheng C.Y."/>
            <person name="Krishnakumar V."/>
            <person name="Chan A.P."/>
            <person name="Thibaud-Nissen F."/>
            <person name="Schobel S."/>
            <person name="Town C.D."/>
        </authorList>
    </citation>
    <scope>GENOME REANNOTATION</scope>
    <source>
        <strain>cv. Columbia</strain>
    </source>
</reference>
<accession>Q9SYZ8</accession>
<gene>
    <name type="ordered locus">At4g34330</name>
    <name type="ORF">F10M10.100</name>
</gene>
<proteinExistence type="inferred from homology"/>
<name>U496B_ARATH</name>
<organism>
    <name type="scientific">Arabidopsis thaliana</name>
    <name type="common">Mouse-ear cress</name>
    <dbReference type="NCBI Taxonomy" id="3702"/>
    <lineage>
        <taxon>Eukaryota</taxon>
        <taxon>Viridiplantae</taxon>
        <taxon>Streptophyta</taxon>
        <taxon>Embryophyta</taxon>
        <taxon>Tracheophyta</taxon>
        <taxon>Spermatophyta</taxon>
        <taxon>Magnoliopsida</taxon>
        <taxon>eudicotyledons</taxon>
        <taxon>Gunneridae</taxon>
        <taxon>Pentapetalae</taxon>
        <taxon>rosids</taxon>
        <taxon>malvids</taxon>
        <taxon>Brassicales</taxon>
        <taxon>Brassicaceae</taxon>
        <taxon>Camelineae</taxon>
        <taxon>Arabidopsis</taxon>
    </lineage>
</organism>
<sequence length="354" mass="40457">MGNKTSRKSKEKSGRNYTTELRSYEAACKEDMEIQSFDTRMQARTSHVISTLATGVEVRSLSFDSLKAVIGSLLDMNQEVAKVILDCKKDIWKNQEMFEFVEAYFETSLKTLDFFNALKRGLQGVQINHLFILDGNGYKKTLQELKRFKDADRPFDQDFFKMFQSVYNQQKWMLDKLQRRQNKLDKKLKRIRTWRKLSSIIFMATFATLVICSVLAATMAAPHVAAALAAATPPVGSMGKWIDSLWKNYENEIKGQTEVFSSMYVGTYVAVQDLNNIKDLIKRLDTEIRGMVKNAEYAGELGPVKIGINAIKTQLEVFKKNVEELEIQADMCSTDIRRARTVILQRIINATCST</sequence>
<evidence type="ECO:0000255" key="1"/>
<evidence type="ECO:0000305" key="2"/>
<keyword id="KW-0175">Coiled coil</keyword>
<keyword id="KW-0472">Membrane</keyword>
<keyword id="KW-1185">Reference proteome</keyword>
<keyword id="KW-0812">Transmembrane</keyword>
<keyword id="KW-1133">Transmembrane helix</keyword>
<comment type="subcellular location">
    <subcellularLocation>
        <location evidence="2">Membrane</location>
        <topology evidence="2">Multi-pass membrane protein</topology>
    </subcellularLocation>
</comment>
<comment type="similarity">
    <text evidence="2">Belongs to the UPF0496 family.</text>
</comment>
<feature type="chain" id="PRO_0000306887" description="UPF0496 protein At4g34330">
    <location>
        <begin position="1"/>
        <end position="354"/>
    </location>
</feature>
<feature type="transmembrane region" description="Helical" evidence="1">
    <location>
        <begin position="200"/>
        <end position="220"/>
    </location>
</feature>
<feature type="transmembrane region" description="Helical" evidence="1">
    <location>
        <begin position="222"/>
        <end position="242"/>
    </location>
</feature>
<feature type="coiled-coil region" evidence="1">
    <location>
        <begin position="270"/>
        <end position="341"/>
    </location>
</feature>
<protein>
    <recommendedName>
        <fullName>UPF0496 protein At4g34330</fullName>
    </recommendedName>
</protein>